<organism>
    <name type="scientific">Oryza sativa subsp. japonica</name>
    <name type="common">Rice</name>
    <dbReference type="NCBI Taxonomy" id="39947"/>
    <lineage>
        <taxon>Eukaryota</taxon>
        <taxon>Viridiplantae</taxon>
        <taxon>Streptophyta</taxon>
        <taxon>Embryophyta</taxon>
        <taxon>Tracheophyta</taxon>
        <taxon>Spermatophyta</taxon>
        <taxon>Magnoliopsida</taxon>
        <taxon>Liliopsida</taxon>
        <taxon>Poales</taxon>
        <taxon>Poaceae</taxon>
        <taxon>BOP clade</taxon>
        <taxon>Oryzoideae</taxon>
        <taxon>Oryzeae</taxon>
        <taxon>Oryzinae</taxon>
        <taxon>Oryza</taxon>
        <taxon>Oryza sativa</taxon>
    </lineage>
</organism>
<sequence>MGDAGGHSHHHQHGFQPQLLSFGGVGHHHHLHQFTAQPQPPAASHTRGRGGGGEIVPATTTPRSRGGGGGGGGEIVAVQGGHIVRSTGRKDRHSKVCTARGPRDRRVRLSAHTAIQFYDVQDRLGYDRPSKAVDWLIKNAKDAIDKLDVLPAWQPTAGGAGAGNAAAPPSSSTHPDSAENSDDQAQAITVAHTAFDFAGGGSGGTSFLPPSLDSDAIADTIKSFFPMGGTAGGEASSSTTAAQSSAMGFQSYTPDLLSRTGSQSQELRLSLQSLPDPMFHHQQHRHGGGGGGGNGTTQQALFSGAANYSFGGGAMWATEQQAQNQRMLPWNVPDPGGGGGAAYLFNVSQQAAHMQAAAAALGGHQSQFFFQRGPLQSSNQPSERGWPETVEADNQMSHHQGGLSPSVSAAIGFAAPGIGFSGFRLPARIQGDEEHNGGGGGNGDKPPPPSSVSSASHH</sequence>
<name>PCF5_ORYSJ</name>
<evidence type="ECO:0000255" key="1">
    <source>
        <dbReference type="PROSITE-ProRule" id="PRU00701"/>
    </source>
</evidence>
<evidence type="ECO:0000256" key="2">
    <source>
        <dbReference type="SAM" id="MobiDB-lite"/>
    </source>
</evidence>
<evidence type="ECO:0000269" key="3">
    <source>
    </source>
</evidence>
<evidence type="ECO:0000305" key="4"/>
<gene>
    <name type="primary">PCF5</name>
    <name type="ordered locus">Os01g0213800</name>
    <name type="ordered locus">LOC_Os01g11550</name>
    <name type="ORF">OsJ_000844</name>
    <name type="ORF">OSJNBa0038J17.21</name>
</gene>
<reference key="1">
    <citation type="journal article" date="2002" name="Plant J.">
        <title>DNA binding and dimerization specificity and potential targets for the TCP protein family.</title>
        <authorList>
            <person name="Kosugi S."/>
            <person name="Ohashi Y."/>
        </authorList>
    </citation>
    <scope>NUCLEOTIDE SEQUENCE [MRNA]</scope>
    <scope>FUNCTION</scope>
    <source>
        <strain>cv. Nipponbare</strain>
    </source>
</reference>
<reference key="2">
    <citation type="journal article" date="2002" name="Nature">
        <title>The genome sequence and structure of rice chromosome 1.</title>
        <authorList>
            <person name="Sasaki T."/>
            <person name="Matsumoto T."/>
            <person name="Yamamoto K."/>
            <person name="Sakata K."/>
            <person name="Baba T."/>
            <person name="Katayose Y."/>
            <person name="Wu J."/>
            <person name="Niimura Y."/>
            <person name="Cheng Z."/>
            <person name="Nagamura Y."/>
            <person name="Antonio B.A."/>
            <person name="Kanamori H."/>
            <person name="Hosokawa S."/>
            <person name="Masukawa M."/>
            <person name="Arikawa K."/>
            <person name="Chiden Y."/>
            <person name="Hayashi M."/>
            <person name="Okamoto M."/>
            <person name="Ando T."/>
            <person name="Aoki H."/>
            <person name="Arita K."/>
            <person name="Hamada M."/>
            <person name="Harada C."/>
            <person name="Hijishita S."/>
            <person name="Honda M."/>
            <person name="Ichikawa Y."/>
            <person name="Idonuma A."/>
            <person name="Iijima M."/>
            <person name="Ikeda M."/>
            <person name="Ikeno M."/>
            <person name="Ito S."/>
            <person name="Ito T."/>
            <person name="Ito Y."/>
            <person name="Ito Y."/>
            <person name="Iwabuchi A."/>
            <person name="Kamiya K."/>
            <person name="Karasawa W."/>
            <person name="Katagiri S."/>
            <person name="Kikuta A."/>
            <person name="Kobayashi N."/>
            <person name="Kono I."/>
            <person name="Machita K."/>
            <person name="Maehara T."/>
            <person name="Mizuno H."/>
            <person name="Mizubayashi T."/>
            <person name="Mukai Y."/>
            <person name="Nagasaki H."/>
            <person name="Nakashima M."/>
            <person name="Nakama Y."/>
            <person name="Nakamichi Y."/>
            <person name="Nakamura M."/>
            <person name="Namiki N."/>
            <person name="Negishi M."/>
            <person name="Ohta I."/>
            <person name="Ono N."/>
            <person name="Saji S."/>
            <person name="Sakai K."/>
            <person name="Shibata M."/>
            <person name="Shimokawa T."/>
            <person name="Shomura A."/>
            <person name="Song J."/>
            <person name="Takazaki Y."/>
            <person name="Terasawa K."/>
            <person name="Tsuji K."/>
            <person name="Waki K."/>
            <person name="Yamagata H."/>
            <person name="Yamane H."/>
            <person name="Yoshiki S."/>
            <person name="Yoshihara R."/>
            <person name="Yukawa K."/>
            <person name="Zhong H."/>
            <person name="Iwama H."/>
            <person name="Endo T."/>
            <person name="Ito H."/>
            <person name="Hahn J.H."/>
            <person name="Kim H.-I."/>
            <person name="Eun M.-Y."/>
            <person name="Yano M."/>
            <person name="Jiang J."/>
            <person name="Gojobori T."/>
        </authorList>
    </citation>
    <scope>NUCLEOTIDE SEQUENCE [LARGE SCALE GENOMIC DNA]</scope>
    <source>
        <strain>cv. Nipponbare</strain>
    </source>
</reference>
<reference key="3">
    <citation type="journal article" date="2005" name="Nature">
        <title>The map-based sequence of the rice genome.</title>
        <authorList>
            <consortium name="International rice genome sequencing project (IRGSP)"/>
        </authorList>
    </citation>
    <scope>NUCLEOTIDE SEQUENCE [LARGE SCALE GENOMIC DNA]</scope>
    <source>
        <strain>cv. Nipponbare</strain>
    </source>
</reference>
<reference key="4">
    <citation type="journal article" date="2008" name="Nucleic Acids Res.">
        <title>The rice annotation project database (RAP-DB): 2008 update.</title>
        <authorList>
            <consortium name="The rice annotation project (RAP)"/>
        </authorList>
    </citation>
    <scope>GENOME REANNOTATION</scope>
    <source>
        <strain>cv. Nipponbare</strain>
    </source>
</reference>
<reference key="5">
    <citation type="journal article" date="2013" name="Rice">
        <title>Improvement of the Oryza sativa Nipponbare reference genome using next generation sequence and optical map data.</title>
        <authorList>
            <person name="Kawahara Y."/>
            <person name="de la Bastide M."/>
            <person name="Hamilton J.P."/>
            <person name="Kanamori H."/>
            <person name="McCombie W.R."/>
            <person name="Ouyang S."/>
            <person name="Schwartz D.C."/>
            <person name="Tanaka T."/>
            <person name="Wu J."/>
            <person name="Zhou S."/>
            <person name="Childs K.L."/>
            <person name="Davidson R.M."/>
            <person name="Lin H."/>
            <person name="Quesada-Ocampo L."/>
            <person name="Vaillancourt B."/>
            <person name="Sakai H."/>
            <person name="Lee S.S."/>
            <person name="Kim J."/>
            <person name="Numa H."/>
            <person name="Itoh T."/>
            <person name="Buell C.R."/>
            <person name="Matsumoto T."/>
        </authorList>
    </citation>
    <scope>GENOME REANNOTATION</scope>
    <source>
        <strain>cv. Nipponbare</strain>
    </source>
</reference>
<reference key="6">
    <citation type="journal article" date="2005" name="PLoS Biol.">
        <title>The genomes of Oryza sativa: a history of duplications.</title>
        <authorList>
            <person name="Yu J."/>
            <person name="Wang J."/>
            <person name="Lin W."/>
            <person name="Li S."/>
            <person name="Li H."/>
            <person name="Zhou J."/>
            <person name="Ni P."/>
            <person name="Dong W."/>
            <person name="Hu S."/>
            <person name="Zeng C."/>
            <person name="Zhang J."/>
            <person name="Zhang Y."/>
            <person name="Li R."/>
            <person name="Xu Z."/>
            <person name="Li S."/>
            <person name="Li X."/>
            <person name="Zheng H."/>
            <person name="Cong L."/>
            <person name="Lin L."/>
            <person name="Yin J."/>
            <person name="Geng J."/>
            <person name="Li G."/>
            <person name="Shi J."/>
            <person name="Liu J."/>
            <person name="Lv H."/>
            <person name="Li J."/>
            <person name="Wang J."/>
            <person name="Deng Y."/>
            <person name="Ran L."/>
            <person name="Shi X."/>
            <person name="Wang X."/>
            <person name="Wu Q."/>
            <person name="Li C."/>
            <person name="Ren X."/>
            <person name="Wang J."/>
            <person name="Wang X."/>
            <person name="Li D."/>
            <person name="Liu D."/>
            <person name="Zhang X."/>
            <person name="Ji Z."/>
            <person name="Zhao W."/>
            <person name="Sun Y."/>
            <person name="Zhang Z."/>
            <person name="Bao J."/>
            <person name="Han Y."/>
            <person name="Dong L."/>
            <person name="Ji J."/>
            <person name="Chen P."/>
            <person name="Wu S."/>
            <person name="Liu J."/>
            <person name="Xiao Y."/>
            <person name="Bu D."/>
            <person name="Tan J."/>
            <person name="Yang L."/>
            <person name="Ye C."/>
            <person name="Zhang J."/>
            <person name="Xu J."/>
            <person name="Zhou Y."/>
            <person name="Yu Y."/>
            <person name="Zhang B."/>
            <person name="Zhuang S."/>
            <person name="Wei H."/>
            <person name="Liu B."/>
            <person name="Lei M."/>
            <person name="Yu H."/>
            <person name="Li Y."/>
            <person name="Xu H."/>
            <person name="Wei S."/>
            <person name="He X."/>
            <person name="Fang L."/>
            <person name="Zhang Z."/>
            <person name="Zhang Y."/>
            <person name="Huang X."/>
            <person name="Su Z."/>
            <person name="Tong W."/>
            <person name="Li J."/>
            <person name="Tong Z."/>
            <person name="Li S."/>
            <person name="Ye J."/>
            <person name="Wang L."/>
            <person name="Fang L."/>
            <person name="Lei T."/>
            <person name="Chen C.-S."/>
            <person name="Chen H.-C."/>
            <person name="Xu Z."/>
            <person name="Li H."/>
            <person name="Huang H."/>
            <person name="Zhang F."/>
            <person name="Xu H."/>
            <person name="Li N."/>
            <person name="Zhao C."/>
            <person name="Li S."/>
            <person name="Dong L."/>
            <person name="Huang Y."/>
            <person name="Li L."/>
            <person name="Xi Y."/>
            <person name="Qi Q."/>
            <person name="Li W."/>
            <person name="Zhang B."/>
            <person name="Hu W."/>
            <person name="Zhang Y."/>
            <person name="Tian X."/>
            <person name="Jiao Y."/>
            <person name="Liang X."/>
            <person name="Jin J."/>
            <person name="Gao L."/>
            <person name="Zheng W."/>
            <person name="Hao B."/>
            <person name="Liu S.-M."/>
            <person name="Wang W."/>
            <person name="Yuan L."/>
            <person name="Cao M."/>
            <person name="McDermott J."/>
            <person name="Samudrala R."/>
            <person name="Wang J."/>
            <person name="Wong G.K.-S."/>
            <person name="Yang H."/>
        </authorList>
    </citation>
    <scope>NUCLEOTIDE SEQUENCE [LARGE SCALE GENOMIC DNA]</scope>
    <source>
        <strain>cv. Nipponbare</strain>
    </source>
</reference>
<dbReference type="EMBL" id="AB071805">
    <property type="protein sequence ID" value="BAB92952.1"/>
    <property type="molecule type" value="mRNA"/>
</dbReference>
<dbReference type="EMBL" id="AP003104">
    <property type="protein sequence ID" value="BAD73155.1"/>
    <property type="status" value="ALT_SEQ"/>
    <property type="molecule type" value="Genomic_DNA"/>
</dbReference>
<dbReference type="EMBL" id="AP008207">
    <property type="protein sequence ID" value="BAF04299.1"/>
    <property type="molecule type" value="Genomic_DNA"/>
</dbReference>
<dbReference type="EMBL" id="AP014957">
    <property type="status" value="NOT_ANNOTATED_CDS"/>
    <property type="molecule type" value="Genomic_DNA"/>
</dbReference>
<dbReference type="EMBL" id="CM000138">
    <property type="protein sequence ID" value="EAZ11019.1"/>
    <property type="status" value="ALT_SEQ"/>
    <property type="molecule type" value="Genomic_DNA"/>
</dbReference>
<dbReference type="RefSeq" id="XP_015634261.1">
    <property type="nucleotide sequence ID" value="XM_015778775.1"/>
</dbReference>
<dbReference type="RefSeq" id="XP_015634268.1">
    <property type="nucleotide sequence ID" value="XM_015778782.1"/>
</dbReference>
<dbReference type="SMR" id="Q8LT07"/>
<dbReference type="FunCoup" id="Q8LT07">
    <property type="interactions" value="1274"/>
</dbReference>
<dbReference type="STRING" id="39947.Q8LT07"/>
<dbReference type="PaxDb" id="39947-Q8LT07"/>
<dbReference type="EnsemblPlants" id="Os01t0213800-01">
    <property type="protein sequence ID" value="Os01t0213800-01"/>
    <property type="gene ID" value="Os01g0213800"/>
</dbReference>
<dbReference type="Gramene" id="Os01t0213800-01">
    <property type="protein sequence ID" value="Os01t0213800-01"/>
    <property type="gene ID" value="Os01g0213800"/>
</dbReference>
<dbReference type="KEGG" id="dosa:Os01g0213800"/>
<dbReference type="eggNOG" id="ENOG502QRP9">
    <property type="taxonomic scope" value="Eukaryota"/>
</dbReference>
<dbReference type="HOGENOM" id="CLU_033594_1_0_1"/>
<dbReference type="InParanoid" id="Q8LT07"/>
<dbReference type="OrthoDB" id="1927134at2759"/>
<dbReference type="Proteomes" id="UP000000763">
    <property type="component" value="Chromosome 1"/>
</dbReference>
<dbReference type="Proteomes" id="UP000007752">
    <property type="component" value="Chromosome 1"/>
</dbReference>
<dbReference type="Proteomes" id="UP000059680">
    <property type="component" value="Chromosome 1"/>
</dbReference>
<dbReference type="ExpressionAtlas" id="Q8LT07">
    <property type="expression patterns" value="baseline and differential"/>
</dbReference>
<dbReference type="GO" id="GO:0005634">
    <property type="term" value="C:nucleus"/>
    <property type="evidence" value="ECO:0000318"/>
    <property type="project" value="GO_Central"/>
</dbReference>
<dbReference type="GO" id="GO:0003700">
    <property type="term" value="F:DNA-binding transcription factor activity"/>
    <property type="evidence" value="ECO:0000318"/>
    <property type="project" value="GO_Central"/>
</dbReference>
<dbReference type="GO" id="GO:0043565">
    <property type="term" value="F:sequence-specific DNA binding"/>
    <property type="evidence" value="ECO:0000318"/>
    <property type="project" value="GO_Central"/>
</dbReference>
<dbReference type="InterPro" id="IPR017887">
    <property type="entry name" value="TF_TCP_subgr"/>
</dbReference>
<dbReference type="InterPro" id="IPR005333">
    <property type="entry name" value="Transcription_factor_TCP"/>
</dbReference>
<dbReference type="PANTHER" id="PTHR31072:SF273">
    <property type="entry name" value="TRANSCRIPTION FACTOR TCP4"/>
    <property type="match status" value="1"/>
</dbReference>
<dbReference type="PANTHER" id="PTHR31072">
    <property type="entry name" value="TRANSCRIPTION FACTOR TCP4-RELATED"/>
    <property type="match status" value="1"/>
</dbReference>
<dbReference type="Pfam" id="PF03634">
    <property type="entry name" value="TCP"/>
    <property type="match status" value="1"/>
</dbReference>
<dbReference type="PROSITE" id="PS51369">
    <property type="entry name" value="TCP"/>
    <property type="match status" value="1"/>
</dbReference>
<protein>
    <recommendedName>
        <fullName>Transcription factor PCF5</fullName>
    </recommendedName>
</protein>
<comment type="function">
    <text evidence="3">Transcription activator. Binds the promoter core sequence 5'-GGNCC-3'.</text>
</comment>
<comment type="subunit">
    <text evidence="4">Forms homodimers and heterodimers.</text>
</comment>
<comment type="subcellular location">
    <subcellularLocation>
        <location evidence="4">Nucleus</location>
    </subcellularLocation>
</comment>
<comment type="sequence caution" evidence="4">
    <conflict type="erroneous gene model prediction">
        <sequence resource="EMBL-CDS" id="BAD73155"/>
    </conflict>
</comment>
<comment type="sequence caution" evidence="4">
    <conflict type="erroneous gene model prediction">
        <sequence resource="EMBL-CDS" id="EAZ11019"/>
    </conflict>
</comment>
<comment type="sequence caution" evidence="4">
    <conflict type="frameshift">
        <sequence resource="EMBL-CDS" id="EAZ11019"/>
    </conflict>
</comment>
<keyword id="KW-0010">Activator</keyword>
<keyword id="KW-0217">Developmental protein</keyword>
<keyword id="KW-0238">DNA-binding</keyword>
<keyword id="KW-0539">Nucleus</keyword>
<keyword id="KW-1185">Reference proteome</keyword>
<keyword id="KW-0804">Transcription</keyword>
<keyword id="KW-0805">Transcription regulation</keyword>
<accession>Q8LT07</accession>
<accession>A2ZQM2</accession>
<accession>Q5QN53</accession>
<proteinExistence type="evidence at transcript level"/>
<feature type="chain" id="PRO_0000330807" description="Transcription factor PCF5">
    <location>
        <begin position="1"/>
        <end position="458"/>
    </location>
</feature>
<feature type="domain" description="TCP" evidence="1">
    <location>
        <begin position="89"/>
        <end position="147"/>
    </location>
</feature>
<feature type="region of interest" description="Disordered" evidence="2">
    <location>
        <begin position="1"/>
        <end position="103"/>
    </location>
</feature>
<feature type="region of interest" description="Disordered" evidence="2">
    <location>
        <begin position="159"/>
        <end position="182"/>
    </location>
</feature>
<feature type="region of interest" description="Disordered" evidence="2">
    <location>
        <begin position="278"/>
        <end position="299"/>
    </location>
</feature>
<feature type="region of interest" description="Disordered" evidence="2">
    <location>
        <begin position="424"/>
        <end position="458"/>
    </location>
</feature>
<feature type="compositionally biased region" description="Gly residues" evidence="2">
    <location>
        <begin position="65"/>
        <end position="74"/>
    </location>
</feature>